<sequence length="190" mass="21175">MKINGNEIRPGNVIEHQGSLWVAVKCNAVKPGKGGAFNQVELKNVIDGTKLNERFRAAETVEKVRLEQKDFTFLYQQGEALVFMDTESYEQLELQRDFVGDRAAFLQDGMTVTVELHEEKPLGISLPDQVTVTIAEADPAIKGQTVTSSYKPAILENGIRILVPPFVQAGERIIVDTNELTYIRRVSEKG</sequence>
<keyword id="KW-0963">Cytoplasm</keyword>
<keyword id="KW-0251">Elongation factor</keyword>
<keyword id="KW-0648">Protein biosynthesis</keyword>
<organism>
    <name type="scientific">Bartonella bacilliformis (strain ATCC 35685 / KC583 / Herrer 020/F12,63)</name>
    <dbReference type="NCBI Taxonomy" id="360095"/>
    <lineage>
        <taxon>Bacteria</taxon>
        <taxon>Pseudomonadati</taxon>
        <taxon>Pseudomonadota</taxon>
        <taxon>Alphaproteobacteria</taxon>
        <taxon>Hyphomicrobiales</taxon>
        <taxon>Bartonellaceae</taxon>
        <taxon>Bartonella</taxon>
    </lineage>
</organism>
<dbReference type="EMBL" id="CP000524">
    <property type="protein sequence ID" value="ABM45176.1"/>
    <property type="molecule type" value="Genomic_DNA"/>
</dbReference>
<dbReference type="RefSeq" id="WP_005765956.1">
    <property type="nucleotide sequence ID" value="NC_008783.1"/>
</dbReference>
<dbReference type="SMR" id="A1UR93"/>
<dbReference type="STRING" id="360095.BARBAKC583_0158"/>
<dbReference type="GeneID" id="4684020"/>
<dbReference type="KEGG" id="bbk:BARBAKC583_0158"/>
<dbReference type="PATRIC" id="fig|360095.6.peg.157"/>
<dbReference type="eggNOG" id="COG0231">
    <property type="taxonomic scope" value="Bacteria"/>
</dbReference>
<dbReference type="HOGENOM" id="CLU_074944_1_1_5"/>
<dbReference type="OrthoDB" id="9801844at2"/>
<dbReference type="UniPathway" id="UPA00345"/>
<dbReference type="Proteomes" id="UP000000643">
    <property type="component" value="Chromosome"/>
</dbReference>
<dbReference type="GO" id="GO:0005737">
    <property type="term" value="C:cytoplasm"/>
    <property type="evidence" value="ECO:0007669"/>
    <property type="project" value="UniProtKB-SubCell"/>
</dbReference>
<dbReference type="GO" id="GO:0003746">
    <property type="term" value="F:translation elongation factor activity"/>
    <property type="evidence" value="ECO:0007669"/>
    <property type="project" value="UniProtKB-UniRule"/>
</dbReference>
<dbReference type="GO" id="GO:0043043">
    <property type="term" value="P:peptide biosynthetic process"/>
    <property type="evidence" value="ECO:0007669"/>
    <property type="project" value="InterPro"/>
</dbReference>
<dbReference type="CDD" id="cd04470">
    <property type="entry name" value="S1_EF-P_repeat_1"/>
    <property type="match status" value="1"/>
</dbReference>
<dbReference type="CDD" id="cd05794">
    <property type="entry name" value="S1_EF-P_repeat_2"/>
    <property type="match status" value="1"/>
</dbReference>
<dbReference type="FunFam" id="2.30.30.30:FF:000003">
    <property type="entry name" value="Elongation factor P"/>
    <property type="match status" value="1"/>
</dbReference>
<dbReference type="FunFam" id="2.40.50.140:FF:000004">
    <property type="entry name" value="Elongation factor P"/>
    <property type="match status" value="1"/>
</dbReference>
<dbReference type="FunFam" id="2.40.50.140:FF:000009">
    <property type="entry name" value="Elongation factor P"/>
    <property type="match status" value="1"/>
</dbReference>
<dbReference type="Gene3D" id="2.30.30.30">
    <property type="match status" value="1"/>
</dbReference>
<dbReference type="Gene3D" id="2.40.50.140">
    <property type="entry name" value="Nucleic acid-binding proteins"/>
    <property type="match status" value="2"/>
</dbReference>
<dbReference type="HAMAP" id="MF_00141">
    <property type="entry name" value="EF_P"/>
    <property type="match status" value="1"/>
</dbReference>
<dbReference type="InterPro" id="IPR015365">
    <property type="entry name" value="Elong-fact-P_C"/>
</dbReference>
<dbReference type="InterPro" id="IPR012340">
    <property type="entry name" value="NA-bd_OB-fold"/>
</dbReference>
<dbReference type="InterPro" id="IPR014722">
    <property type="entry name" value="Rib_uL2_dom2"/>
</dbReference>
<dbReference type="InterPro" id="IPR020599">
    <property type="entry name" value="Transl_elong_fac_P/YeiP"/>
</dbReference>
<dbReference type="InterPro" id="IPR013185">
    <property type="entry name" value="Transl_elong_KOW-like"/>
</dbReference>
<dbReference type="InterPro" id="IPR001059">
    <property type="entry name" value="Transl_elong_P/YeiP_cen"/>
</dbReference>
<dbReference type="InterPro" id="IPR013852">
    <property type="entry name" value="Transl_elong_P/YeiP_CS"/>
</dbReference>
<dbReference type="InterPro" id="IPR011768">
    <property type="entry name" value="Transl_elongation_fac_P"/>
</dbReference>
<dbReference type="InterPro" id="IPR008991">
    <property type="entry name" value="Translation_prot_SH3-like_sf"/>
</dbReference>
<dbReference type="NCBIfam" id="TIGR00038">
    <property type="entry name" value="efp"/>
    <property type="match status" value="1"/>
</dbReference>
<dbReference type="NCBIfam" id="NF001810">
    <property type="entry name" value="PRK00529.1"/>
    <property type="match status" value="1"/>
</dbReference>
<dbReference type="PANTHER" id="PTHR30053">
    <property type="entry name" value="ELONGATION FACTOR P"/>
    <property type="match status" value="1"/>
</dbReference>
<dbReference type="PANTHER" id="PTHR30053:SF14">
    <property type="entry name" value="TRANSLATION ELONGATION FACTOR KOW-LIKE DOMAIN-CONTAINING PROTEIN"/>
    <property type="match status" value="1"/>
</dbReference>
<dbReference type="Pfam" id="PF01132">
    <property type="entry name" value="EFP"/>
    <property type="match status" value="1"/>
</dbReference>
<dbReference type="Pfam" id="PF08207">
    <property type="entry name" value="EFP_N"/>
    <property type="match status" value="1"/>
</dbReference>
<dbReference type="Pfam" id="PF09285">
    <property type="entry name" value="Elong-fact-P_C"/>
    <property type="match status" value="1"/>
</dbReference>
<dbReference type="PIRSF" id="PIRSF005901">
    <property type="entry name" value="EF-P"/>
    <property type="match status" value="1"/>
</dbReference>
<dbReference type="SMART" id="SM01185">
    <property type="entry name" value="EFP"/>
    <property type="match status" value="1"/>
</dbReference>
<dbReference type="SMART" id="SM00841">
    <property type="entry name" value="Elong-fact-P_C"/>
    <property type="match status" value="1"/>
</dbReference>
<dbReference type="SUPFAM" id="SSF50249">
    <property type="entry name" value="Nucleic acid-binding proteins"/>
    <property type="match status" value="2"/>
</dbReference>
<dbReference type="SUPFAM" id="SSF50104">
    <property type="entry name" value="Translation proteins SH3-like domain"/>
    <property type="match status" value="1"/>
</dbReference>
<dbReference type="PROSITE" id="PS01275">
    <property type="entry name" value="EFP"/>
    <property type="match status" value="1"/>
</dbReference>
<protein>
    <recommendedName>
        <fullName evidence="1">Elongation factor P</fullName>
        <shortName evidence="1">EF-P</shortName>
    </recommendedName>
</protein>
<name>EFP_BARBK</name>
<gene>
    <name evidence="1" type="primary">efp</name>
    <name type="ordered locus">BARBAKC583_0158</name>
</gene>
<proteinExistence type="inferred from homology"/>
<feature type="chain" id="PRO_1000010686" description="Elongation factor P">
    <location>
        <begin position="1"/>
        <end position="190"/>
    </location>
</feature>
<evidence type="ECO:0000255" key="1">
    <source>
        <dbReference type="HAMAP-Rule" id="MF_00141"/>
    </source>
</evidence>
<accession>A1UR93</accession>
<reference key="1">
    <citation type="submission" date="2006-12" db="EMBL/GenBank/DDBJ databases">
        <authorList>
            <person name="Hendrix L."/>
            <person name="Mohamoud Y."/>
            <person name="Radune D."/>
            <person name="Shvartsbeyn A."/>
            <person name="Daugherty S."/>
            <person name="Dodson R."/>
            <person name="Durkin A.S."/>
            <person name="Harkins D."/>
            <person name="Huot H."/>
            <person name="Kothari S.P."/>
            <person name="Madupu R."/>
            <person name="Li J."/>
            <person name="Nelson W.C."/>
            <person name="Shrivastava S."/>
            <person name="Giglio M.G."/>
            <person name="Haft D."/>
            <person name="Selengut J."/>
            <person name="Fraser-Ligget C."/>
            <person name="Seshadri R."/>
        </authorList>
    </citation>
    <scope>NUCLEOTIDE SEQUENCE [LARGE SCALE GENOMIC DNA]</scope>
    <source>
        <strain>ATCC 35685 / KC583 / Herrer 020/F12,63</strain>
    </source>
</reference>
<comment type="function">
    <text evidence="1">Involved in peptide bond synthesis. Stimulates efficient translation and peptide-bond synthesis on native or reconstituted 70S ribosomes in vitro. Probably functions indirectly by altering the affinity of the ribosome for aminoacyl-tRNA, thus increasing their reactivity as acceptors for peptidyl transferase.</text>
</comment>
<comment type="pathway">
    <text evidence="1">Protein biosynthesis; polypeptide chain elongation.</text>
</comment>
<comment type="subcellular location">
    <subcellularLocation>
        <location evidence="1">Cytoplasm</location>
    </subcellularLocation>
</comment>
<comment type="similarity">
    <text evidence="1">Belongs to the elongation factor P family.</text>
</comment>